<feature type="chain" id="PRO_0000345371" description="Photosystem II reaction center X protein">
    <location>
        <begin position="1"/>
        <end position="61"/>
    </location>
</feature>
<feature type="transmembrane region" description="Helical" evidence="1">
    <location>
        <begin position="26"/>
        <end position="46"/>
    </location>
</feature>
<gene>
    <name evidence="1" type="primary">psbX</name>
    <name type="ordered locus">P9301_00731</name>
</gene>
<protein>
    <recommendedName>
        <fullName evidence="1">Photosystem II reaction center X protein</fullName>
    </recommendedName>
</protein>
<comment type="function">
    <text evidence="1">Involved in the binding and/or turnover of quinones at the Q(B) site of Photosystem II.</text>
</comment>
<comment type="subunit">
    <text evidence="1">PSII consists of a core antenna complex that captures photons, and an electron transfer chain that converts photonic excitation into a charge separation. PSII forms dimeric complexes.</text>
</comment>
<comment type="subcellular location">
    <subcellularLocation>
        <location evidence="1">Cellular thylakoid membrane</location>
        <topology evidence="1">Single-pass membrane protein</topology>
    </subcellularLocation>
</comment>
<comment type="similarity">
    <text evidence="1">Belongs to the PsbX family. Type 2 subfamily.</text>
</comment>
<accession>A3PAC1</accession>
<evidence type="ECO:0000255" key="1">
    <source>
        <dbReference type="HAMAP-Rule" id="MF_01388"/>
    </source>
</evidence>
<name>PSBX_PROM0</name>
<dbReference type="EMBL" id="CP000576">
    <property type="protein sequence ID" value="ABO16696.1"/>
    <property type="molecule type" value="Genomic_DNA"/>
</dbReference>
<dbReference type="RefSeq" id="WP_011862101.1">
    <property type="nucleotide sequence ID" value="NC_009091.1"/>
</dbReference>
<dbReference type="SMR" id="A3PAC1"/>
<dbReference type="STRING" id="167546.P9301_00731"/>
<dbReference type="KEGG" id="pmg:P9301_00731"/>
<dbReference type="HOGENOM" id="CLU_209178_0_0_3"/>
<dbReference type="OrthoDB" id="541645at2"/>
<dbReference type="Proteomes" id="UP000001430">
    <property type="component" value="Chromosome"/>
</dbReference>
<dbReference type="GO" id="GO:0009523">
    <property type="term" value="C:photosystem II"/>
    <property type="evidence" value="ECO:0007669"/>
    <property type="project" value="UniProtKB-KW"/>
</dbReference>
<dbReference type="GO" id="GO:0031676">
    <property type="term" value="C:plasma membrane-derived thylakoid membrane"/>
    <property type="evidence" value="ECO:0007669"/>
    <property type="project" value="UniProtKB-SubCell"/>
</dbReference>
<dbReference type="GO" id="GO:0015979">
    <property type="term" value="P:photosynthesis"/>
    <property type="evidence" value="ECO:0007669"/>
    <property type="project" value="UniProtKB-KW"/>
</dbReference>
<dbReference type="HAMAP" id="MF_01388">
    <property type="entry name" value="PSII_PsbX_2"/>
    <property type="match status" value="1"/>
</dbReference>
<dbReference type="InterPro" id="IPR009518">
    <property type="entry name" value="PSII_PsbX"/>
</dbReference>
<dbReference type="InterPro" id="IPR023428">
    <property type="entry name" value="PSII_PsbX_type_2_subfam"/>
</dbReference>
<dbReference type="Pfam" id="PF06596">
    <property type="entry name" value="PsbX"/>
    <property type="match status" value="1"/>
</dbReference>
<keyword id="KW-0472">Membrane</keyword>
<keyword id="KW-0602">Photosynthesis</keyword>
<keyword id="KW-0604">Photosystem II</keyword>
<keyword id="KW-1185">Reference proteome</keyword>
<keyword id="KW-0793">Thylakoid</keyword>
<keyword id="KW-0812">Transmembrane</keyword>
<keyword id="KW-1133">Transmembrane helix</keyword>
<organism>
    <name type="scientific">Prochlorococcus marinus (strain MIT 9301)</name>
    <dbReference type="NCBI Taxonomy" id="167546"/>
    <lineage>
        <taxon>Bacteria</taxon>
        <taxon>Bacillati</taxon>
        <taxon>Cyanobacteriota</taxon>
        <taxon>Cyanophyceae</taxon>
        <taxon>Synechococcales</taxon>
        <taxon>Prochlorococcaceae</taxon>
        <taxon>Prochlorococcus</taxon>
    </lineage>
</organism>
<sequence length="61" mass="6411">MLQISNLLLAADFSAEVANNSAVGMIGSFIAAALLIVIPATAFLIFVSQKDSLDRTSTGRR</sequence>
<reference key="1">
    <citation type="journal article" date="2007" name="PLoS Genet.">
        <title>Patterns and implications of gene gain and loss in the evolution of Prochlorococcus.</title>
        <authorList>
            <person name="Kettler G.C."/>
            <person name="Martiny A.C."/>
            <person name="Huang K."/>
            <person name="Zucker J."/>
            <person name="Coleman M.L."/>
            <person name="Rodrigue S."/>
            <person name="Chen F."/>
            <person name="Lapidus A."/>
            <person name="Ferriera S."/>
            <person name="Johnson J."/>
            <person name="Steglich C."/>
            <person name="Church G.M."/>
            <person name="Richardson P."/>
            <person name="Chisholm S.W."/>
        </authorList>
    </citation>
    <scope>NUCLEOTIDE SEQUENCE [LARGE SCALE GENOMIC DNA]</scope>
    <source>
        <strain>MIT 9301</strain>
    </source>
</reference>
<proteinExistence type="inferred from homology"/>